<reference key="1">
    <citation type="journal article" date="2001" name="Plant Physiol.">
        <title>Aquaporins constitute a large and highly divergent protein family in maize.</title>
        <authorList>
            <person name="Chaumont F."/>
            <person name="Barrieu F."/>
            <person name="Wojcik E."/>
            <person name="Chrispeels M.J."/>
            <person name="Jung R."/>
        </authorList>
    </citation>
    <scope>NUCLEOTIDE SEQUENCE [MRNA]</scope>
    <scope>GENE FAMILY</scope>
    <scope>NOMENCLATURE</scope>
    <source>
        <strain>cv. B73</strain>
    </source>
</reference>
<keyword id="KW-1003">Cell membrane</keyword>
<keyword id="KW-0472">Membrane</keyword>
<keyword id="KW-1185">Reference proteome</keyword>
<keyword id="KW-0677">Repeat</keyword>
<keyword id="KW-0812">Transmembrane</keyword>
<keyword id="KW-1133">Transmembrane helix</keyword>
<keyword id="KW-0813">Transport</keyword>
<name>PIP16_MAIZE</name>
<gene>
    <name type="primary">PIP1-6</name>
</gene>
<dbReference type="EMBL" id="AF326490">
    <property type="protein sequence ID" value="AAK26757.1"/>
    <property type="molecule type" value="mRNA"/>
</dbReference>
<dbReference type="RefSeq" id="NP_001105023.1">
    <property type="nucleotide sequence ID" value="NM_001111553.1"/>
</dbReference>
<dbReference type="SMR" id="Q9ATN0"/>
<dbReference type="STRING" id="4577.Q9ATN0"/>
<dbReference type="PaxDb" id="4577-GRMZM2G136032_P01"/>
<dbReference type="GeneID" id="113523644"/>
<dbReference type="eggNOG" id="KOG0223">
    <property type="taxonomic scope" value="Eukaryota"/>
</dbReference>
<dbReference type="InParanoid" id="Q9ATN0"/>
<dbReference type="Proteomes" id="UP000007305">
    <property type="component" value="Unplaced"/>
</dbReference>
<dbReference type="ExpressionAtlas" id="Q9ATN0">
    <property type="expression patterns" value="baseline and differential"/>
</dbReference>
<dbReference type="GO" id="GO:0005829">
    <property type="term" value="C:cytosol"/>
    <property type="evidence" value="ECO:0000314"/>
    <property type="project" value="AgBase"/>
</dbReference>
<dbReference type="GO" id="GO:0016020">
    <property type="term" value="C:membrane"/>
    <property type="evidence" value="ECO:0000304"/>
    <property type="project" value="AgBase"/>
</dbReference>
<dbReference type="GO" id="GO:0005886">
    <property type="term" value="C:plasma membrane"/>
    <property type="evidence" value="ECO:0000318"/>
    <property type="project" value="GO_Central"/>
</dbReference>
<dbReference type="GO" id="GO:0032991">
    <property type="term" value="C:protein-containing complex"/>
    <property type="evidence" value="ECO:0000304"/>
    <property type="project" value="AgBase"/>
</dbReference>
<dbReference type="GO" id="GO:0015250">
    <property type="term" value="F:water channel activity"/>
    <property type="evidence" value="ECO:0000318"/>
    <property type="project" value="GO_Central"/>
</dbReference>
<dbReference type="GO" id="GO:0051290">
    <property type="term" value="P:protein heterotetramerization"/>
    <property type="evidence" value="ECO:0000304"/>
    <property type="project" value="AgBase"/>
</dbReference>
<dbReference type="GO" id="GO:0051289">
    <property type="term" value="P:protein homotetramerization"/>
    <property type="evidence" value="ECO:0000304"/>
    <property type="project" value="AgBase"/>
</dbReference>
<dbReference type="GO" id="GO:0009414">
    <property type="term" value="P:response to water deprivation"/>
    <property type="evidence" value="ECO:0000318"/>
    <property type="project" value="GO_Central"/>
</dbReference>
<dbReference type="CDD" id="cd00333">
    <property type="entry name" value="MIP"/>
    <property type="match status" value="1"/>
</dbReference>
<dbReference type="FunFam" id="1.20.1080.10:FF:000001">
    <property type="entry name" value="Probable aquaporin PIP1-2"/>
    <property type="match status" value="1"/>
</dbReference>
<dbReference type="Gene3D" id="1.20.1080.10">
    <property type="entry name" value="Glycerol uptake facilitator protein"/>
    <property type="match status" value="1"/>
</dbReference>
<dbReference type="InterPro" id="IPR023271">
    <property type="entry name" value="Aquaporin-like"/>
</dbReference>
<dbReference type="InterPro" id="IPR034294">
    <property type="entry name" value="Aquaporin_transptr"/>
</dbReference>
<dbReference type="InterPro" id="IPR000425">
    <property type="entry name" value="MIP"/>
</dbReference>
<dbReference type="InterPro" id="IPR022357">
    <property type="entry name" value="MIP_CS"/>
</dbReference>
<dbReference type="NCBIfam" id="TIGR00861">
    <property type="entry name" value="MIP"/>
    <property type="match status" value="1"/>
</dbReference>
<dbReference type="PANTHER" id="PTHR45687">
    <property type="entry name" value="AQUAPORIN OR AQUAGLYCEROPORIN RELATED"/>
    <property type="match status" value="1"/>
</dbReference>
<dbReference type="Pfam" id="PF00230">
    <property type="entry name" value="MIP"/>
    <property type="match status" value="1"/>
</dbReference>
<dbReference type="PRINTS" id="PR00783">
    <property type="entry name" value="MINTRINSICP"/>
</dbReference>
<dbReference type="SUPFAM" id="SSF81338">
    <property type="entry name" value="Aquaporin-like"/>
    <property type="match status" value="1"/>
</dbReference>
<dbReference type="PROSITE" id="PS00221">
    <property type="entry name" value="MIP"/>
    <property type="match status" value="1"/>
</dbReference>
<accession>Q9ATN0</accession>
<comment type="function">
    <text evidence="1">Aquaporins facilitate the transport of water and small neutral solutes across cell membranes.</text>
</comment>
<comment type="subcellular location">
    <subcellularLocation>
        <location evidence="1">Cell membrane</location>
        <topology evidence="1">Multi-pass membrane protein</topology>
    </subcellularLocation>
</comment>
<comment type="domain">
    <text>Aquaporins contain two tandem repeats each containing three membrane-spanning domains and a pore-forming loop with the signature motif Asn-Pro-Ala (NPA).</text>
</comment>
<comment type="similarity">
    <text evidence="3">Belongs to the MIP/aquaporin (TC 1.A.8) family. PIP (TC 1.A.8.11) subfamily.</text>
</comment>
<sequence length="296" mass="31023">MAGGTLQDRSEEEDVRVGVDRFPERQPIGTAADDLGRDYSEPPAAPLFEASELSSWSFYRAGIAEFVATFLFLYVTVLTVMGVSKSPSKCGTVGIQGIAWAFGGMIFALVYCTAGVSGGHINPAVTFGLLLARKLSLTRAVYYVVMQCLGAVCGAGVVKAFGSALYESAGGGANAVSPGYTKGDGLGAEVVGTFVLVYTVFSATDAKRTARDSHVPALAPLPIGFAVFLVHLATIPITGTGINPARSLGAAIIYDNPHGWHGHWIFWVGPFAGAALAAVYHQVVLRAIPFKSSAHY</sequence>
<evidence type="ECO:0000250" key="1"/>
<evidence type="ECO:0000255" key="2"/>
<evidence type="ECO:0000305" key="3"/>
<protein>
    <recommendedName>
        <fullName>Aquaporin PIP1-6</fullName>
    </recommendedName>
    <alternativeName>
        <fullName>Plasma membrane intrinsic protein 1-6</fullName>
    </alternativeName>
    <alternativeName>
        <fullName>ZmPIP1-6</fullName>
    </alternativeName>
    <alternativeName>
        <fullName>ZmPIP1;6</fullName>
    </alternativeName>
</protein>
<proteinExistence type="evidence at transcript level"/>
<organism>
    <name type="scientific">Zea mays</name>
    <name type="common">Maize</name>
    <dbReference type="NCBI Taxonomy" id="4577"/>
    <lineage>
        <taxon>Eukaryota</taxon>
        <taxon>Viridiplantae</taxon>
        <taxon>Streptophyta</taxon>
        <taxon>Embryophyta</taxon>
        <taxon>Tracheophyta</taxon>
        <taxon>Spermatophyta</taxon>
        <taxon>Magnoliopsida</taxon>
        <taxon>Liliopsida</taxon>
        <taxon>Poales</taxon>
        <taxon>Poaceae</taxon>
        <taxon>PACMAD clade</taxon>
        <taxon>Panicoideae</taxon>
        <taxon>Andropogonodae</taxon>
        <taxon>Andropogoneae</taxon>
        <taxon>Tripsacinae</taxon>
        <taxon>Zea</taxon>
    </lineage>
</organism>
<feature type="chain" id="PRO_0000286017" description="Aquaporin PIP1-6">
    <location>
        <begin position="1"/>
        <end position="296"/>
    </location>
</feature>
<feature type="transmembrane region" description="Helical; Name=1" evidence="2">
    <location>
        <begin position="63"/>
        <end position="83"/>
    </location>
</feature>
<feature type="transmembrane region" description="Helical; Name=2" evidence="2">
    <location>
        <begin position="98"/>
        <end position="120"/>
    </location>
</feature>
<feature type="transmembrane region" description="Helical; Name=3" evidence="2">
    <location>
        <begin position="141"/>
        <end position="161"/>
    </location>
</feature>
<feature type="transmembrane region" description="Helical; Name=4" evidence="2">
    <location>
        <begin position="183"/>
        <end position="203"/>
    </location>
</feature>
<feature type="transmembrane region" description="Helical; Name=5" evidence="2">
    <location>
        <begin position="217"/>
        <end position="237"/>
    </location>
</feature>
<feature type="transmembrane region" description="Helical; Name=6" evidence="2">
    <location>
        <begin position="265"/>
        <end position="285"/>
    </location>
</feature>
<feature type="short sequence motif" description="NPA 1" evidence="1">
    <location>
        <begin position="122"/>
        <end position="124"/>
    </location>
</feature>
<feature type="short sequence motif" description="NPA 2" evidence="1">
    <location>
        <begin position="243"/>
        <end position="245"/>
    </location>
</feature>